<feature type="chain" id="PRO_0000142045" description="1-(5-phosphoribosyl)-5-[(5-phosphoribosylamino)methylideneamino] imidazole-4-carboxamide isomerase">
    <location>
        <begin position="1"/>
        <end position="253"/>
    </location>
</feature>
<feature type="active site" description="Proton acceptor" evidence="1">
    <location>
        <position position="19"/>
    </location>
</feature>
<feature type="active site" description="Proton donor" evidence="1">
    <location>
        <position position="141"/>
    </location>
</feature>
<sequence length="253" mass="27502">MSSQTPGSEPRMEIWPAIDLRHGKPVRLRQGDYDQQTTFGDDPVEFAKRWQESGAKRLHLVDLDAARGDSPDANRDAVQRIIEATGLPCQMGGGVRDEITIESLLNVGVTRLVVGSRALKDPDWFVEMCDKYPGKLVAGIDARDGKVATQGWLETSDVSAFEFATKLRSRTENIAAIVYTDIAKDGMMQGPNFEGLAEMAAASDIPLVASGGVTTYDDIKQLVEMKMPAAIVGRSLYDGVMELGEVVRLAGDV</sequence>
<proteinExistence type="inferred from homology"/>
<accession>Q7UG70</accession>
<organism>
    <name type="scientific">Rhodopirellula baltica (strain DSM 10527 / NCIMB 13988 / SH1)</name>
    <dbReference type="NCBI Taxonomy" id="243090"/>
    <lineage>
        <taxon>Bacteria</taxon>
        <taxon>Pseudomonadati</taxon>
        <taxon>Planctomycetota</taxon>
        <taxon>Planctomycetia</taxon>
        <taxon>Pirellulales</taxon>
        <taxon>Pirellulaceae</taxon>
        <taxon>Rhodopirellula</taxon>
    </lineage>
</organism>
<keyword id="KW-0028">Amino-acid biosynthesis</keyword>
<keyword id="KW-0963">Cytoplasm</keyword>
<keyword id="KW-0368">Histidine biosynthesis</keyword>
<keyword id="KW-0413">Isomerase</keyword>
<keyword id="KW-1185">Reference proteome</keyword>
<dbReference type="EC" id="5.3.1.16" evidence="1"/>
<dbReference type="EMBL" id="BX294147">
    <property type="protein sequence ID" value="CAD78459.1"/>
    <property type="molecule type" value="Genomic_DNA"/>
</dbReference>
<dbReference type="RefSeq" id="NP_868181.1">
    <property type="nucleotide sequence ID" value="NC_005027.1"/>
</dbReference>
<dbReference type="SMR" id="Q7UG70"/>
<dbReference type="FunCoup" id="Q7UG70">
    <property type="interactions" value="423"/>
</dbReference>
<dbReference type="STRING" id="243090.RB8080"/>
<dbReference type="EnsemblBacteria" id="CAD78459">
    <property type="protein sequence ID" value="CAD78459"/>
    <property type="gene ID" value="RB8080"/>
</dbReference>
<dbReference type="KEGG" id="rba:RB8080"/>
<dbReference type="PATRIC" id="fig|243090.15.peg.3904"/>
<dbReference type="eggNOG" id="COG0106">
    <property type="taxonomic scope" value="Bacteria"/>
</dbReference>
<dbReference type="HOGENOM" id="CLU_048577_1_1_0"/>
<dbReference type="InParanoid" id="Q7UG70"/>
<dbReference type="OrthoDB" id="9781903at2"/>
<dbReference type="UniPathway" id="UPA00031">
    <property type="reaction ID" value="UER00009"/>
</dbReference>
<dbReference type="Proteomes" id="UP000001025">
    <property type="component" value="Chromosome"/>
</dbReference>
<dbReference type="GO" id="GO:0005737">
    <property type="term" value="C:cytoplasm"/>
    <property type="evidence" value="ECO:0000318"/>
    <property type="project" value="GO_Central"/>
</dbReference>
<dbReference type="GO" id="GO:0003949">
    <property type="term" value="F:1-(5-phosphoribosyl)-5-[(5-phosphoribosylamino)methylideneamino]imidazole-4-carboxamide isomerase activity"/>
    <property type="evidence" value="ECO:0000318"/>
    <property type="project" value="GO_Central"/>
</dbReference>
<dbReference type="GO" id="GO:0000105">
    <property type="term" value="P:L-histidine biosynthetic process"/>
    <property type="evidence" value="ECO:0000318"/>
    <property type="project" value="GO_Central"/>
</dbReference>
<dbReference type="CDD" id="cd04732">
    <property type="entry name" value="HisA"/>
    <property type="match status" value="1"/>
</dbReference>
<dbReference type="FunFam" id="3.20.20.70:FF:000009">
    <property type="entry name" value="1-(5-phosphoribosyl)-5-[(5-phosphoribosylamino)methylideneamino] imidazole-4-carboxamide isomerase"/>
    <property type="match status" value="1"/>
</dbReference>
<dbReference type="Gene3D" id="3.20.20.70">
    <property type="entry name" value="Aldolase class I"/>
    <property type="match status" value="1"/>
</dbReference>
<dbReference type="HAMAP" id="MF_01014">
    <property type="entry name" value="HisA"/>
    <property type="match status" value="1"/>
</dbReference>
<dbReference type="InterPro" id="IPR013785">
    <property type="entry name" value="Aldolase_TIM"/>
</dbReference>
<dbReference type="InterPro" id="IPR006062">
    <property type="entry name" value="His_biosynth"/>
</dbReference>
<dbReference type="InterPro" id="IPR006063">
    <property type="entry name" value="HisA_bact_arch"/>
</dbReference>
<dbReference type="InterPro" id="IPR044524">
    <property type="entry name" value="Isoase_HisA-like"/>
</dbReference>
<dbReference type="InterPro" id="IPR023016">
    <property type="entry name" value="Isoase_HisA-like_bact"/>
</dbReference>
<dbReference type="InterPro" id="IPR011060">
    <property type="entry name" value="RibuloseP-bd_barrel"/>
</dbReference>
<dbReference type="NCBIfam" id="TIGR00007">
    <property type="entry name" value="1-(5-phosphoribosyl)-5-[(5-phosphoribosylamino)methylideneamino]imidazole-4-carboxamide isomerase"/>
    <property type="match status" value="1"/>
</dbReference>
<dbReference type="PANTHER" id="PTHR43090">
    <property type="entry name" value="1-(5-PHOSPHORIBOSYL)-5-[(5-PHOSPHORIBOSYLAMINO)METHYLIDENEAMINO] IMIDAZOLE-4-CARBOXAMIDE ISOMERASE"/>
    <property type="match status" value="1"/>
</dbReference>
<dbReference type="PANTHER" id="PTHR43090:SF2">
    <property type="entry name" value="1-(5-PHOSPHORIBOSYL)-5-[(5-PHOSPHORIBOSYLAMINO)METHYLIDENEAMINO] IMIDAZOLE-4-CARBOXAMIDE ISOMERASE"/>
    <property type="match status" value="1"/>
</dbReference>
<dbReference type="Pfam" id="PF00977">
    <property type="entry name" value="His_biosynth"/>
    <property type="match status" value="1"/>
</dbReference>
<dbReference type="SUPFAM" id="SSF51366">
    <property type="entry name" value="Ribulose-phoshate binding barrel"/>
    <property type="match status" value="1"/>
</dbReference>
<comment type="catalytic activity">
    <reaction evidence="1">
        <text>1-(5-phospho-beta-D-ribosyl)-5-[(5-phospho-beta-D-ribosylamino)methylideneamino]imidazole-4-carboxamide = 5-[(5-phospho-1-deoxy-D-ribulos-1-ylimino)methylamino]-1-(5-phospho-beta-D-ribosyl)imidazole-4-carboxamide</text>
        <dbReference type="Rhea" id="RHEA:15469"/>
        <dbReference type="ChEBI" id="CHEBI:58435"/>
        <dbReference type="ChEBI" id="CHEBI:58525"/>
        <dbReference type="EC" id="5.3.1.16"/>
    </reaction>
</comment>
<comment type="pathway">
    <text evidence="1">Amino-acid biosynthesis; L-histidine biosynthesis; L-histidine from 5-phospho-alpha-D-ribose 1-diphosphate: step 4/9.</text>
</comment>
<comment type="subcellular location">
    <subcellularLocation>
        <location evidence="1">Cytoplasm</location>
    </subcellularLocation>
</comment>
<comment type="similarity">
    <text evidence="1">Belongs to the HisA/HisF family.</text>
</comment>
<reference key="1">
    <citation type="journal article" date="2003" name="Proc. Natl. Acad. Sci. U.S.A.">
        <title>Complete genome sequence of the marine planctomycete Pirellula sp. strain 1.</title>
        <authorList>
            <person name="Gloeckner F.O."/>
            <person name="Kube M."/>
            <person name="Bauer M."/>
            <person name="Teeling H."/>
            <person name="Lombardot T."/>
            <person name="Ludwig W."/>
            <person name="Gade D."/>
            <person name="Beck A."/>
            <person name="Borzym K."/>
            <person name="Heitmann K."/>
            <person name="Rabus R."/>
            <person name="Schlesner H."/>
            <person name="Amann R."/>
            <person name="Reinhardt R."/>
        </authorList>
    </citation>
    <scope>NUCLEOTIDE SEQUENCE [LARGE SCALE GENOMIC DNA]</scope>
    <source>
        <strain>DSM 10527 / NCIMB 13988 / SH1</strain>
    </source>
</reference>
<gene>
    <name evidence="1" type="primary">hisA</name>
    <name type="ordered locus">RB8080</name>
</gene>
<evidence type="ECO:0000255" key="1">
    <source>
        <dbReference type="HAMAP-Rule" id="MF_01014"/>
    </source>
</evidence>
<protein>
    <recommendedName>
        <fullName evidence="1">1-(5-phosphoribosyl)-5-[(5-phosphoribosylamino)methylideneamino] imidazole-4-carboxamide isomerase</fullName>
        <ecNumber evidence="1">5.3.1.16</ecNumber>
    </recommendedName>
    <alternativeName>
        <fullName evidence="1">Phosphoribosylformimino-5-aminoimidazole carboxamide ribotide isomerase</fullName>
    </alternativeName>
</protein>
<name>HIS4_RHOBA</name>